<proteinExistence type="evidence at transcript level"/>
<accession>Q8BQN5</accession>
<accession>A2RSM0</accession>
<accession>Q8CC61</accession>
<keyword id="KW-1185">Reference proteome</keyword>
<evidence type="ECO:0000305" key="1"/>
<sequence>MGCIQSITCKARIRRENIVVYDVCATIDQCPTRIEETSPIVLRYKTPYFKASARVVMPPIPRHETWVVGWIQACNQMEFFNTYSDLGMSSWELPDLREGRVKAISDSDGVSYPWYGNTTETVTLVGPTNKISRFSVSMNDNFYPSVTWAVPVSDSNVPLLTRIKRDQSFTTWLVAMNTTTKEKIILQTIKWRMRVDIEVDPLQLLGQRARLVGRTQQEQPRILSRMEPIPPNALVKPNANDAQVLMWRPKRGPPLVVIPPK</sequence>
<gene>
    <name type="primary">Fam78b</name>
</gene>
<reference key="1">
    <citation type="journal article" date="2005" name="Science">
        <title>The transcriptional landscape of the mammalian genome.</title>
        <authorList>
            <person name="Carninci P."/>
            <person name="Kasukawa T."/>
            <person name="Katayama S."/>
            <person name="Gough J."/>
            <person name="Frith M.C."/>
            <person name="Maeda N."/>
            <person name="Oyama R."/>
            <person name="Ravasi T."/>
            <person name="Lenhard B."/>
            <person name="Wells C."/>
            <person name="Kodzius R."/>
            <person name="Shimokawa K."/>
            <person name="Bajic V.B."/>
            <person name="Brenner S.E."/>
            <person name="Batalov S."/>
            <person name="Forrest A.R."/>
            <person name="Zavolan M."/>
            <person name="Davis M.J."/>
            <person name="Wilming L.G."/>
            <person name="Aidinis V."/>
            <person name="Allen J.E."/>
            <person name="Ambesi-Impiombato A."/>
            <person name="Apweiler R."/>
            <person name="Aturaliya R.N."/>
            <person name="Bailey T.L."/>
            <person name="Bansal M."/>
            <person name="Baxter L."/>
            <person name="Beisel K.W."/>
            <person name="Bersano T."/>
            <person name="Bono H."/>
            <person name="Chalk A.M."/>
            <person name="Chiu K.P."/>
            <person name="Choudhary V."/>
            <person name="Christoffels A."/>
            <person name="Clutterbuck D.R."/>
            <person name="Crowe M.L."/>
            <person name="Dalla E."/>
            <person name="Dalrymple B.P."/>
            <person name="de Bono B."/>
            <person name="Della Gatta G."/>
            <person name="di Bernardo D."/>
            <person name="Down T."/>
            <person name="Engstrom P."/>
            <person name="Fagiolini M."/>
            <person name="Faulkner G."/>
            <person name="Fletcher C.F."/>
            <person name="Fukushima T."/>
            <person name="Furuno M."/>
            <person name="Futaki S."/>
            <person name="Gariboldi M."/>
            <person name="Georgii-Hemming P."/>
            <person name="Gingeras T.R."/>
            <person name="Gojobori T."/>
            <person name="Green R.E."/>
            <person name="Gustincich S."/>
            <person name="Harbers M."/>
            <person name="Hayashi Y."/>
            <person name="Hensch T.K."/>
            <person name="Hirokawa N."/>
            <person name="Hill D."/>
            <person name="Huminiecki L."/>
            <person name="Iacono M."/>
            <person name="Ikeo K."/>
            <person name="Iwama A."/>
            <person name="Ishikawa T."/>
            <person name="Jakt M."/>
            <person name="Kanapin A."/>
            <person name="Katoh M."/>
            <person name="Kawasawa Y."/>
            <person name="Kelso J."/>
            <person name="Kitamura H."/>
            <person name="Kitano H."/>
            <person name="Kollias G."/>
            <person name="Krishnan S.P."/>
            <person name="Kruger A."/>
            <person name="Kummerfeld S.K."/>
            <person name="Kurochkin I.V."/>
            <person name="Lareau L.F."/>
            <person name="Lazarevic D."/>
            <person name="Lipovich L."/>
            <person name="Liu J."/>
            <person name="Liuni S."/>
            <person name="McWilliam S."/>
            <person name="Madan Babu M."/>
            <person name="Madera M."/>
            <person name="Marchionni L."/>
            <person name="Matsuda H."/>
            <person name="Matsuzawa S."/>
            <person name="Miki H."/>
            <person name="Mignone F."/>
            <person name="Miyake S."/>
            <person name="Morris K."/>
            <person name="Mottagui-Tabar S."/>
            <person name="Mulder N."/>
            <person name="Nakano N."/>
            <person name="Nakauchi H."/>
            <person name="Ng P."/>
            <person name="Nilsson R."/>
            <person name="Nishiguchi S."/>
            <person name="Nishikawa S."/>
            <person name="Nori F."/>
            <person name="Ohara O."/>
            <person name="Okazaki Y."/>
            <person name="Orlando V."/>
            <person name="Pang K.C."/>
            <person name="Pavan W.J."/>
            <person name="Pavesi G."/>
            <person name="Pesole G."/>
            <person name="Petrovsky N."/>
            <person name="Piazza S."/>
            <person name="Reed J."/>
            <person name="Reid J.F."/>
            <person name="Ring B.Z."/>
            <person name="Ringwald M."/>
            <person name="Rost B."/>
            <person name="Ruan Y."/>
            <person name="Salzberg S.L."/>
            <person name="Sandelin A."/>
            <person name="Schneider C."/>
            <person name="Schoenbach C."/>
            <person name="Sekiguchi K."/>
            <person name="Semple C.A."/>
            <person name="Seno S."/>
            <person name="Sessa L."/>
            <person name="Sheng Y."/>
            <person name="Shibata Y."/>
            <person name="Shimada H."/>
            <person name="Shimada K."/>
            <person name="Silva D."/>
            <person name="Sinclair B."/>
            <person name="Sperling S."/>
            <person name="Stupka E."/>
            <person name="Sugiura K."/>
            <person name="Sultana R."/>
            <person name="Takenaka Y."/>
            <person name="Taki K."/>
            <person name="Tammoja K."/>
            <person name="Tan S.L."/>
            <person name="Tang S."/>
            <person name="Taylor M.S."/>
            <person name="Tegner J."/>
            <person name="Teichmann S.A."/>
            <person name="Ueda H.R."/>
            <person name="van Nimwegen E."/>
            <person name="Verardo R."/>
            <person name="Wei C.L."/>
            <person name="Yagi K."/>
            <person name="Yamanishi H."/>
            <person name="Zabarovsky E."/>
            <person name="Zhu S."/>
            <person name="Zimmer A."/>
            <person name="Hide W."/>
            <person name="Bult C."/>
            <person name="Grimmond S.M."/>
            <person name="Teasdale R.D."/>
            <person name="Liu E.T."/>
            <person name="Brusic V."/>
            <person name="Quackenbush J."/>
            <person name="Wahlestedt C."/>
            <person name="Mattick J.S."/>
            <person name="Hume D.A."/>
            <person name="Kai C."/>
            <person name="Sasaki D."/>
            <person name="Tomaru Y."/>
            <person name="Fukuda S."/>
            <person name="Kanamori-Katayama M."/>
            <person name="Suzuki M."/>
            <person name="Aoki J."/>
            <person name="Arakawa T."/>
            <person name="Iida J."/>
            <person name="Imamura K."/>
            <person name="Itoh M."/>
            <person name="Kato T."/>
            <person name="Kawaji H."/>
            <person name="Kawagashira N."/>
            <person name="Kawashima T."/>
            <person name="Kojima M."/>
            <person name="Kondo S."/>
            <person name="Konno H."/>
            <person name="Nakano K."/>
            <person name="Ninomiya N."/>
            <person name="Nishio T."/>
            <person name="Okada M."/>
            <person name="Plessy C."/>
            <person name="Shibata K."/>
            <person name="Shiraki T."/>
            <person name="Suzuki S."/>
            <person name="Tagami M."/>
            <person name="Waki K."/>
            <person name="Watahiki A."/>
            <person name="Okamura-Oho Y."/>
            <person name="Suzuki H."/>
            <person name="Kawai J."/>
            <person name="Hayashizaki Y."/>
        </authorList>
    </citation>
    <scope>NUCLEOTIDE SEQUENCE [LARGE SCALE MRNA]</scope>
    <source>
        <strain>C57BL/6J</strain>
        <tissue>Corpus striatum</tissue>
        <tissue>Epididymis</tissue>
    </source>
</reference>
<reference key="2">
    <citation type="journal article" date="2004" name="Genome Res.">
        <title>The status, quality, and expansion of the NIH full-length cDNA project: the Mammalian Gene Collection (MGC).</title>
        <authorList>
            <consortium name="The MGC Project Team"/>
        </authorList>
    </citation>
    <scope>NUCLEOTIDE SEQUENCE [LARGE SCALE MRNA]</scope>
    <source>
        <tissue>Brain</tissue>
    </source>
</reference>
<organism>
    <name type="scientific">Mus musculus</name>
    <name type="common">Mouse</name>
    <dbReference type="NCBI Taxonomy" id="10090"/>
    <lineage>
        <taxon>Eukaryota</taxon>
        <taxon>Metazoa</taxon>
        <taxon>Chordata</taxon>
        <taxon>Craniata</taxon>
        <taxon>Vertebrata</taxon>
        <taxon>Euteleostomi</taxon>
        <taxon>Mammalia</taxon>
        <taxon>Eutheria</taxon>
        <taxon>Euarchontoglires</taxon>
        <taxon>Glires</taxon>
        <taxon>Rodentia</taxon>
        <taxon>Myomorpha</taxon>
        <taxon>Muroidea</taxon>
        <taxon>Muridae</taxon>
        <taxon>Murinae</taxon>
        <taxon>Mus</taxon>
        <taxon>Mus</taxon>
    </lineage>
</organism>
<protein>
    <recommendedName>
        <fullName>Protein FAM78B</fullName>
    </recommendedName>
</protein>
<comment type="similarity">
    <text evidence="1">Belongs to the FAM78 family.</text>
</comment>
<comment type="sequence caution" evidence="1">
    <conflict type="erroneous initiation">
        <sequence resource="EMBL-CDS" id="BAC28491"/>
    </conflict>
</comment>
<comment type="sequence caution" evidence="1">
    <conflict type="erroneous initiation">
        <sequence resource="EMBL-CDS" id="BAC33132"/>
    </conflict>
</comment>
<comment type="sequence caution" evidence="1">
    <conflict type="erroneous initiation">
        <sequence resource="EMBL-CDS" id="BAE25775"/>
    </conflict>
</comment>
<dbReference type="EMBL" id="AK033840">
    <property type="protein sequence ID" value="BAC28491.1"/>
    <property type="status" value="ALT_INIT"/>
    <property type="molecule type" value="mRNA"/>
</dbReference>
<dbReference type="EMBL" id="AK047703">
    <property type="protein sequence ID" value="BAC33132.1"/>
    <property type="status" value="ALT_INIT"/>
    <property type="molecule type" value="mRNA"/>
</dbReference>
<dbReference type="EMBL" id="AK144212">
    <property type="protein sequence ID" value="BAE25775.1"/>
    <property type="status" value="ALT_INIT"/>
    <property type="molecule type" value="mRNA"/>
</dbReference>
<dbReference type="EMBL" id="BC132161">
    <property type="protein sequence ID" value="AAI32162.1"/>
    <property type="molecule type" value="mRNA"/>
</dbReference>
<dbReference type="EMBL" id="BC132525">
    <property type="protein sequence ID" value="AAI32526.1"/>
    <property type="molecule type" value="mRNA"/>
</dbReference>
<dbReference type="CCDS" id="CCDS35764.1"/>
<dbReference type="RefSeq" id="NP_001153733.1">
    <property type="nucleotide sequence ID" value="NM_001160261.1"/>
</dbReference>
<dbReference type="RefSeq" id="NP_001153734.1">
    <property type="nucleotide sequence ID" value="NM_001160262.1"/>
</dbReference>
<dbReference type="RefSeq" id="NP_780670.2">
    <property type="nucleotide sequence ID" value="NM_175461.4"/>
</dbReference>
<dbReference type="RefSeq" id="XP_006496852.1">
    <property type="nucleotide sequence ID" value="XM_006496789.3"/>
</dbReference>
<dbReference type="FunCoup" id="Q8BQN5">
    <property type="interactions" value="9"/>
</dbReference>
<dbReference type="STRING" id="10090.ENSMUSP00000131620"/>
<dbReference type="PaxDb" id="10090-ENSMUSP00000131620"/>
<dbReference type="ProteomicsDB" id="275840"/>
<dbReference type="Antibodypedia" id="34334">
    <property type="antibodies" value="119 antibodies from 17 providers"/>
</dbReference>
<dbReference type="Ensembl" id="ENSMUST00000126198.3">
    <property type="protein sequence ID" value="ENSMUSP00000122636.2"/>
    <property type="gene ID" value="ENSMUSG00000060568.15"/>
</dbReference>
<dbReference type="Ensembl" id="ENSMUST00000156025.2">
    <property type="protein sequence ID" value="ENSMUSP00000117572.2"/>
    <property type="gene ID" value="ENSMUSG00000060568.15"/>
</dbReference>
<dbReference type="Ensembl" id="ENSMUST00000165874.8">
    <property type="protein sequence ID" value="ENSMUSP00000131620.2"/>
    <property type="gene ID" value="ENSMUSG00000060568.15"/>
</dbReference>
<dbReference type="Ensembl" id="ENSMUST00000190081.7">
    <property type="protein sequence ID" value="ENSMUSP00000139628.2"/>
    <property type="gene ID" value="ENSMUSG00000060568.15"/>
</dbReference>
<dbReference type="GeneID" id="226610"/>
<dbReference type="KEGG" id="mmu:226610"/>
<dbReference type="UCSC" id="uc007dks.2">
    <property type="organism name" value="mouse"/>
</dbReference>
<dbReference type="AGR" id="MGI:2443050"/>
<dbReference type="CTD" id="149297"/>
<dbReference type="MGI" id="MGI:2443050">
    <property type="gene designation" value="Fam78b"/>
</dbReference>
<dbReference type="VEuPathDB" id="HostDB:ENSMUSG00000060568"/>
<dbReference type="eggNOG" id="ENOG502QPXK">
    <property type="taxonomic scope" value="Eukaryota"/>
</dbReference>
<dbReference type="GeneTree" id="ENSGT00390000018059"/>
<dbReference type="HOGENOM" id="CLU_085745_0_0_1"/>
<dbReference type="InParanoid" id="Q8BQN5"/>
<dbReference type="OMA" id="MPPIHRN"/>
<dbReference type="OrthoDB" id="9971204at2759"/>
<dbReference type="PhylomeDB" id="Q8BQN5"/>
<dbReference type="TreeFam" id="TF329533"/>
<dbReference type="BioGRID-ORCS" id="226610">
    <property type="hits" value="2 hits in 77 CRISPR screens"/>
</dbReference>
<dbReference type="ChiTaRS" id="Fam78b">
    <property type="organism name" value="mouse"/>
</dbReference>
<dbReference type="PRO" id="PR:Q8BQN5"/>
<dbReference type="Proteomes" id="UP000000589">
    <property type="component" value="Chromosome 1"/>
</dbReference>
<dbReference type="RNAct" id="Q8BQN5">
    <property type="molecule type" value="protein"/>
</dbReference>
<dbReference type="Bgee" id="ENSMUSG00000060568">
    <property type="expression patterns" value="Expressed in cortical plate and 98 other cell types or tissues"/>
</dbReference>
<dbReference type="ExpressionAtlas" id="Q8BQN5">
    <property type="expression patterns" value="baseline and differential"/>
</dbReference>
<dbReference type="InterPro" id="IPR029638">
    <property type="entry name" value="FAM78"/>
</dbReference>
<dbReference type="PANTHER" id="PTHR31655">
    <property type="entry name" value="PROTEIN FAM78A"/>
    <property type="match status" value="1"/>
</dbReference>
<dbReference type="PANTHER" id="PTHR31655:SF0">
    <property type="entry name" value="PROTEIN FAM78B"/>
    <property type="match status" value="1"/>
</dbReference>
<feature type="chain" id="PRO_0000265115" description="Protein FAM78B">
    <location>
        <begin position="1"/>
        <end position="261"/>
    </location>
</feature>
<name>FA78B_MOUSE</name>